<name>CH60_ECOLU</name>
<protein>
    <recommendedName>
        <fullName evidence="1">Chaperonin GroEL</fullName>
        <ecNumber evidence="1">5.6.1.7</ecNumber>
    </recommendedName>
    <alternativeName>
        <fullName evidence="1">60 kDa chaperonin</fullName>
    </alternativeName>
    <alternativeName>
        <fullName evidence="1">Chaperonin-60</fullName>
        <shortName evidence="1">Cpn60</shortName>
    </alternativeName>
</protein>
<gene>
    <name evidence="1" type="primary">groEL</name>
    <name evidence="1" type="synonym">groL</name>
    <name type="ordered locus">ECUMN_4678</name>
</gene>
<keyword id="KW-0067">ATP-binding</keyword>
<keyword id="KW-0143">Chaperone</keyword>
<keyword id="KW-0963">Cytoplasm</keyword>
<keyword id="KW-0413">Isomerase</keyword>
<keyword id="KW-0547">Nucleotide-binding</keyword>
<feature type="chain" id="PRO_1000130011" description="Chaperonin GroEL">
    <location>
        <begin position="1"/>
        <end position="548"/>
    </location>
</feature>
<feature type="binding site" evidence="1">
    <location>
        <begin position="30"/>
        <end position="33"/>
    </location>
    <ligand>
        <name>ATP</name>
        <dbReference type="ChEBI" id="CHEBI:30616"/>
    </ligand>
</feature>
<feature type="binding site" evidence="1">
    <location>
        <position position="51"/>
    </location>
    <ligand>
        <name>ATP</name>
        <dbReference type="ChEBI" id="CHEBI:30616"/>
    </ligand>
</feature>
<feature type="binding site" evidence="1">
    <location>
        <begin position="87"/>
        <end position="91"/>
    </location>
    <ligand>
        <name>ATP</name>
        <dbReference type="ChEBI" id="CHEBI:30616"/>
    </ligand>
</feature>
<feature type="binding site" evidence="1">
    <location>
        <position position="415"/>
    </location>
    <ligand>
        <name>ATP</name>
        <dbReference type="ChEBI" id="CHEBI:30616"/>
    </ligand>
</feature>
<feature type="binding site" evidence="1">
    <location>
        <begin position="479"/>
        <end position="481"/>
    </location>
    <ligand>
        <name>ATP</name>
        <dbReference type="ChEBI" id="CHEBI:30616"/>
    </ligand>
</feature>
<feature type="binding site" evidence="1">
    <location>
        <position position="495"/>
    </location>
    <ligand>
        <name>ATP</name>
        <dbReference type="ChEBI" id="CHEBI:30616"/>
    </ligand>
</feature>
<accession>B7NG81</accession>
<evidence type="ECO:0000255" key="1">
    <source>
        <dbReference type="HAMAP-Rule" id="MF_00600"/>
    </source>
</evidence>
<sequence>MAAKDVKFGNDARVKMLRGVNVLADAVKVTLGPKGRNVVLDKSFGAPTITKDGVSVAREIELEDKFENMGAQMVKEVASKANDAAGDGTTTATVLAQAIITEGLKAVAAGMNPMDLKRGIDKAVTAAVEELKALSVPCSDSKAIAQVGTISANSDETVGKLIAEAMDKVGKEGVITVEDGTGLQDELDVVEGMQFDRGYLSPYFINKPETGAVELESPFILLADKKISNIREMLPVLEAVAKAGKPLLIIAEDVEGEALATLVVNTMRGIVKVAAVKAPGFGDRRKAMLQDIATLTGGTVISEEIGMELEKATLEDLGQAKRVVINKDTTTIIDGVGEEAAIQGRVAQIRQQIEEATSDYDREKLQERVAKLAGGVAVIKVGAATEVEMKEKKARVEDALHATRAAVEEGVVAGGGVALIRVASKLADLRGQNEDQNVGIKVALRAMEAPLRQIVLNCGEEPSVVANTVKGGDGNYGYNAATEEYGNMIDMGILDPTKVTRSALQYAASVAGLMITTECMVTDLPKNDAADLGAAGGMGGMGGMGGMM</sequence>
<comment type="function">
    <text evidence="1">Together with its co-chaperonin GroES, plays an essential role in assisting protein folding. The GroEL-GroES system forms a nano-cage that allows encapsulation of the non-native substrate proteins and provides a physical environment optimized to promote and accelerate protein folding.</text>
</comment>
<comment type="catalytic activity">
    <reaction evidence="1">
        <text>ATP + H2O + a folded polypeptide = ADP + phosphate + an unfolded polypeptide.</text>
        <dbReference type="EC" id="5.6.1.7"/>
    </reaction>
</comment>
<comment type="subunit">
    <text evidence="1">Forms a cylinder of 14 subunits composed of two heptameric rings stacked back-to-back. Interacts with the co-chaperonin GroES.</text>
</comment>
<comment type="subcellular location">
    <subcellularLocation>
        <location evidence="1">Cytoplasm</location>
    </subcellularLocation>
</comment>
<comment type="similarity">
    <text evidence="1">Belongs to the chaperonin (HSP60) family.</text>
</comment>
<proteinExistence type="inferred from homology"/>
<reference key="1">
    <citation type="journal article" date="2009" name="PLoS Genet.">
        <title>Organised genome dynamics in the Escherichia coli species results in highly diverse adaptive paths.</title>
        <authorList>
            <person name="Touchon M."/>
            <person name="Hoede C."/>
            <person name="Tenaillon O."/>
            <person name="Barbe V."/>
            <person name="Baeriswyl S."/>
            <person name="Bidet P."/>
            <person name="Bingen E."/>
            <person name="Bonacorsi S."/>
            <person name="Bouchier C."/>
            <person name="Bouvet O."/>
            <person name="Calteau A."/>
            <person name="Chiapello H."/>
            <person name="Clermont O."/>
            <person name="Cruveiller S."/>
            <person name="Danchin A."/>
            <person name="Diard M."/>
            <person name="Dossat C."/>
            <person name="Karoui M.E."/>
            <person name="Frapy E."/>
            <person name="Garry L."/>
            <person name="Ghigo J.M."/>
            <person name="Gilles A.M."/>
            <person name="Johnson J."/>
            <person name="Le Bouguenec C."/>
            <person name="Lescat M."/>
            <person name="Mangenot S."/>
            <person name="Martinez-Jehanne V."/>
            <person name="Matic I."/>
            <person name="Nassif X."/>
            <person name="Oztas S."/>
            <person name="Petit M.A."/>
            <person name="Pichon C."/>
            <person name="Rouy Z."/>
            <person name="Ruf C.S."/>
            <person name="Schneider D."/>
            <person name="Tourret J."/>
            <person name="Vacherie B."/>
            <person name="Vallenet D."/>
            <person name="Medigue C."/>
            <person name="Rocha E.P.C."/>
            <person name="Denamur E."/>
        </authorList>
    </citation>
    <scope>NUCLEOTIDE SEQUENCE [LARGE SCALE GENOMIC DNA]</scope>
    <source>
        <strain>UMN026 / ExPEC</strain>
    </source>
</reference>
<dbReference type="EC" id="5.6.1.7" evidence="1"/>
<dbReference type="EMBL" id="CU928163">
    <property type="protein sequence ID" value="CAR15793.1"/>
    <property type="molecule type" value="Genomic_DNA"/>
</dbReference>
<dbReference type="RefSeq" id="WP_000729117.1">
    <property type="nucleotide sequence ID" value="NC_011751.1"/>
</dbReference>
<dbReference type="RefSeq" id="YP_002415277.1">
    <property type="nucleotide sequence ID" value="NC_011751.1"/>
</dbReference>
<dbReference type="SMR" id="B7NG81"/>
<dbReference type="STRING" id="585056.ECUMN_4678"/>
<dbReference type="GeneID" id="93777681"/>
<dbReference type="KEGG" id="eum:ECUMN_4678"/>
<dbReference type="PATRIC" id="fig|585056.7.peg.4842"/>
<dbReference type="HOGENOM" id="CLU_016503_3_0_6"/>
<dbReference type="Proteomes" id="UP000007097">
    <property type="component" value="Chromosome"/>
</dbReference>
<dbReference type="GO" id="GO:0005737">
    <property type="term" value="C:cytoplasm"/>
    <property type="evidence" value="ECO:0007669"/>
    <property type="project" value="UniProtKB-SubCell"/>
</dbReference>
<dbReference type="GO" id="GO:0005524">
    <property type="term" value="F:ATP binding"/>
    <property type="evidence" value="ECO:0007669"/>
    <property type="project" value="UniProtKB-UniRule"/>
</dbReference>
<dbReference type="GO" id="GO:0140662">
    <property type="term" value="F:ATP-dependent protein folding chaperone"/>
    <property type="evidence" value="ECO:0007669"/>
    <property type="project" value="InterPro"/>
</dbReference>
<dbReference type="GO" id="GO:0016853">
    <property type="term" value="F:isomerase activity"/>
    <property type="evidence" value="ECO:0007669"/>
    <property type="project" value="UniProtKB-KW"/>
</dbReference>
<dbReference type="GO" id="GO:0051082">
    <property type="term" value="F:unfolded protein binding"/>
    <property type="evidence" value="ECO:0007669"/>
    <property type="project" value="UniProtKB-UniRule"/>
</dbReference>
<dbReference type="GO" id="GO:0042026">
    <property type="term" value="P:protein refolding"/>
    <property type="evidence" value="ECO:0007669"/>
    <property type="project" value="UniProtKB-UniRule"/>
</dbReference>
<dbReference type="CDD" id="cd03344">
    <property type="entry name" value="GroEL"/>
    <property type="match status" value="1"/>
</dbReference>
<dbReference type="FunFam" id="1.10.560.10:FF:000001">
    <property type="entry name" value="60 kDa chaperonin"/>
    <property type="match status" value="1"/>
</dbReference>
<dbReference type="FunFam" id="3.50.7.10:FF:000001">
    <property type="entry name" value="60 kDa chaperonin"/>
    <property type="match status" value="1"/>
</dbReference>
<dbReference type="Gene3D" id="3.50.7.10">
    <property type="entry name" value="GroEL"/>
    <property type="match status" value="1"/>
</dbReference>
<dbReference type="Gene3D" id="1.10.560.10">
    <property type="entry name" value="GroEL-like equatorial domain"/>
    <property type="match status" value="1"/>
</dbReference>
<dbReference type="Gene3D" id="3.30.260.10">
    <property type="entry name" value="TCP-1-like chaperonin intermediate domain"/>
    <property type="match status" value="1"/>
</dbReference>
<dbReference type="HAMAP" id="MF_00600">
    <property type="entry name" value="CH60"/>
    <property type="match status" value="1"/>
</dbReference>
<dbReference type="InterPro" id="IPR018370">
    <property type="entry name" value="Chaperonin_Cpn60_CS"/>
</dbReference>
<dbReference type="InterPro" id="IPR001844">
    <property type="entry name" value="Cpn60/GroEL"/>
</dbReference>
<dbReference type="InterPro" id="IPR002423">
    <property type="entry name" value="Cpn60/GroEL/TCP-1"/>
</dbReference>
<dbReference type="InterPro" id="IPR027409">
    <property type="entry name" value="GroEL-like_apical_dom_sf"/>
</dbReference>
<dbReference type="InterPro" id="IPR027413">
    <property type="entry name" value="GROEL-like_equatorial_sf"/>
</dbReference>
<dbReference type="InterPro" id="IPR027410">
    <property type="entry name" value="TCP-1-like_intermed_sf"/>
</dbReference>
<dbReference type="NCBIfam" id="TIGR02348">
    <property type="entry name" value="GroEL"/>
    <property type="match status" value="1"/>
</dbReference>
<dbReference type="NCBIfam" id="NF000592">
    <property type="entry name" value="PRK00013.1"/>
    <property type="match status" value="1"/>
</dbReference>
<dbReference type="NCBIfam" id="NF009487">
    <property type="entry name" value="PRK12849.1"/>
    <property type="match status" value="1"/>
</dbReference>
<dbReference type="NCBIfam" id="NF009488">
    <property type="entry name" value="PRK12850.1"/>
    <property type="match status" value="1"/>
</dbReference>
<dbReference type="NCBIfam" id="NF009489">
    <property type="entry name" value="PRK12851.1"/>
    <property type="match status" value="1"/>
</dbReference>
<dbReference type="PANTHER" id="PTHR45633">
    <property type="entry name" value="60 KDA HEAT SHOCK PROTEIN, MITOCHONDRIAL"/>
    <property type="match status" value="1"/>
</dbReference>
<dbReference type="Pfam" id="PF00118">
    <property type="entry name" value="Cpn60_TCP1"/>
    <property type="match status" value="1"/>
</dbReference>
<dbReference type="PRINTS" id="PR00298">
    <property type="entry name" value="CHAPERONIN60"/>
</dbReference>
<dbReference type="SUPFAM" id="SSF52029">
    <property type="entry name" value="GroEL apical domain-like"/>
    <property type="match status" value="1"/>
</dbReference>
<dbReference type="SUPFAM" id="SSF48592">
    <property type="entry name" value="GroEL equatorial domain-like"/>
    <property type="match status" value="1"/>
</dbReference>
<dbReference type="SUPFAM" id="SSF54849">
    <property type="entry name" value="GroEL-intermediate domain like"/>
    <property type="match status" value="1"/>
</dbReference>
<dbReference type="PROSITE" id="PS00296">
    <property type="entry name" value="CHAPERONINS_CPN60"/>
    <property type="match status" value="1"/>
</dbReference>
<organism>
    <name type="scientific">Escherichia coli O17:K52:H18 (strain UMN026 / ExPEC)</name>
    <dbReference type="NCBI Taxonomy" id="585056"/>
    <lineage>
        <taxon>Bacteria</taxon>
        <taxon>Pseudomonadati</taxon>
        <taxon>Pseudomonadota</taxon>
        <taxon>Gammaproteobacteria</taxon>
        <taxon>Enterobacterales</taxon>
        <taxon>Enterobacteriaceae</taxon>
        <taxon>Escherichia</taxon>
    </lineage>
</organism>